<evidence type="ECO:0000250" key="1">
    <source>
        <dbReference type="UniProtKB" id="Q9LUV2"/>
    </source>
</evidence>
<evidence type="ECO:0000255" key="2">
    <source>
        <dbReference type="PROSITE-ProRule" id="PRU00835"/>
    </source>
</evidence>
<evidence type="ECO:0000269" key="3">
    <source>
    </source>
</evidence>
<evidence type="ECO:0000305" key="4"/>
<evidence type="ECO:0007829" key="5">
    <source>
        <dbReference type="PDB" id="1RJJ"/>
    </source>
</evidence>
<dbReference type="EMBL" id="AB012244">
    <property type="protein sequence ID" value="BAB09130.1"/>
    <property type="molecule type" value="Genomic_DNA"/>
</dbReference>
<dbReference type="EMBL" id="CP002688">
    <property type="protein sequence ID" value="AED93045.1"/>
    <property type="molecule type" value="Genomic_DNA"/>
</dbReference>
<dbReference type="EMBL" id="AY050481">
    <property type="protein sequence ID" value="AAK91494.1"/>
    <property type="molecule type" value="mRNA"/>
</dbReference>
<dbReference type="EMBL" id="AF378886">
    <property type="protein sequence ID" value="AAK55689.1"/>
    <property type="molecule type" value="mRNA"/>
</dbReference>
<dbReference type="RefSeq" id="NP_568422.1">
    <property type="nucleotide sequence ID" value="NM_122164.5"/>
</dbReference>
<dbReference type="PDB" id="1RJJ">
    <property type="method" value="NMR"/>
    <property type="chains" value="A/B=1-111"/>
</dbReference>
<dbReference type="PDBsum" id="1RJJ"/>
<dbReference type="BMRB" id="Q9FK81"/>
<dbReference type="SMR" id="Q9FK81"/>
<dbReference type="BioGRID" id="17596">
    <property type="interactions" value="1"/>
</dbReference>
<dbReference type="FunCoup" id="Q9FK81">
    <property type="interactions" value="12"/>
</dbReference>
<dbReference type="STRING" id="3702.Q9FK81"/>
<dbReference type="iPTMnet" id="Q9FK81"/>
<dbReference type="PaxDb" id="3702-AT5G22580.1"/>
<dbReference type="ProteomicsDB" id="243072"/>
<dbReference type="EnsemblPlants" id="AT5G22580.1">
    <property type="protein sequence ID" value="AT5G22580.1"/>
    <property type="gene ID" value="AT5G22580"/>
</dbReference>
<dbReference type="GeneID" id="832321"/>
<dbReference type="Gramene" id="AT5G22580.1">
    <property type="protein sequence ID" value="AT5G22580.1"/>
    <property type="gene ID" value="AT5G22580"/>
</dbReference>
<dbReference type="KEGG" id="ath:AT5G22580"/>
<dbReference type="Araport" id="AT5G22580"/>
<dbReference type="TAIR" id="AT5G22580"/>
<dbReference type="eggNOG" id="ENOG502S4ZC">
    <property type="taxonomic scope" value="Eukaryota"/>
</dbReference>
<dbReference type="HOGENOM" id="CLU_080664_4_1_1"/>
<dbReference type="InParanoid" id="Q9FK81"/>
<dbReference type="OMA" id="ANEFKHL"/>
<dbReference type="OrthoDB" id="1601230at2759"/>
<dbReference type="PhylomeDB" id="Q9FK81"/>
<dbReference type="EvolutionaryTrace" id="Q9FK81"/>
<dbReference type="PRO" id="PR:Q9FK81"/>
<dbReference type="Proteomes" id="UP000006548">
    <property type="component" value="Chromosome 5"/>
</dbReference>
<dbReference type="ExpressionAtlas" id="Q9FK81">
    <property type="expression patterns" value="baseline and differential"/>
</dbReference>
<dbReference type="GO" id="GO:0009507">
    <property type="term" value="C:chloroplast"/>
    <property type="evidence" value="ECO:0007005"/>
    <property type="project" value="TAIR"/>
</dbReference>
<dbReference type="GO" id="GO:0005829">
    <property type="term" value="C:cytosol"/>
    <property type="evidence" value="ECO:0007005"/>
    <property type="project" value="TAIR"/>
</dbReference>
<dbReference type="GO" id="GO:0009536">
    <property type="term" value="C:plastid"/>
    <property type="evidence" value="ECO:0007005"/>
    <property type="project" value="TAIR"/>
</dbReference>
<dbReference type="GO" id="GO:0046872">
    <property type="term" value="F:metal ion binding"/>
    <property type="evidence" value="ECO:0007669"/>
    <property type="project" value="UniProtKB-KW"/>
</dbReference>
<dbReference type="Gene3D" id="3.30.70.100">
    <property type="match status" value="1"/>
</dbReference>
<dbReference type="InterPro" id="IPR013097">
    <property type="entry name" value="Dabb"/>
</dbReference>
<dbReference type="InterPro" id="IPR011008">
    <property type="entry name" value="Dimeric_a/b-barrel"/>
</dbReference>
<dbReference type="InterPro" id="IPR044662">
    <property type="entry name" value="HS1/DABB1-like"/>
</dbReference>
<dbReference type="PANTHER" id="PTHR33178">
    <property type="match status" value="1"/>
</dbReference>
<dbReference type="PANTHER" id="PTHR33178:SF4">
    <property type="entry name" value="EXPRESSED PROTEIN"/>
    <property type="match status" value="1"/>
</dbReference>
<dbReference type="Pfam" id="PF07876">
    <property type="entry name" value="Dabb"/>
    <property type="match status" value="1"/>
</dbReference>
<dbReference type="SMART" id="SM00886">
    <property type="entry name" value="Dabb"/>
    <property type="match status" value="1"/>
</dbReference>
<dbReference type="SUPFAM" id="SSF54909">
    <property type="entry name" value="Dimeric alpha+beta barrel"/>
    <property type="match status" value="1"/>
</dbReference>
<dbReference type="PROSITE" id="PS51502">
    <property type="entry name" value="S_R_A_B_BARREL"/>
    <property type="match status" value="1"/>
</dbReference>
<name>Y5258_ARATH</name>
<reference key="1">
    <citation type="journal article" date="1998" name="DNA Res.">
        <title>Structural analysis of Arabidopsis thaliana chromosome 5. VI. Sequence features of the regions of 1,367,185 bp covered by 19 physically assigned P1 and TAC clones.</title>
        <authorList>
            <person name="Kotani H."/>
            <person name="Nakamura Y."/>
            <person name="Sato S."/>
            <person name="Asamizu E."/>
            <person name="Kaneko T."/>
            <person name="Miyajima N."/>
            <person name="Tabata S."/>
        </authorList>
    </citation>
    <scope>NUCLEOTIDE SEQUENCE [LARGE SCALE GENOMIC DNA]</scope>
    <source>
        <strain>cv. Columbia</strain>
    </source>
</reference>
<reference key="2">
    <citation type="journal article" date="2017" name="Plant J.">
        <title>Araport11: a complete reannotation of the Arabidopsis thaliana reference genome.</title>
        <authorList>
            <person name="Cheng C.Y."/>
            <person name="Krishnakumar V."/>
            <person name="Chan A.P."/>
            <person name="Thibaud-Nissen F."/>
            <person name="Schobel S."/>
            <person name="Town C.D."/>
        </authorList>
    </citation>
    <scope>GENOME REANNOTATION</scope>
    <source>
        <strain>cv. Columbia</strain>
    </source>
</reference>
<reference key="3">
    <citation type="journal article" date="2003" name="Science">
        <title>Empirical analysis of transcriptional activity in the Arabidopsis genome.</title>
        <authorList>
            <person name="Yamada K."/>
            <person name="Lim J."/>
            <person name="Dale J.M."/>
            <person name="Chen H."/>
            <person name="Shinn P."/>
            <person name="Palm C.J."/>
            <person name="Southwick A.M."/>
            <person name="Wu H.C."/>
            <person name="Kim C.J."/>
            <person name="Nguyen M."/>
            <person name="Pham P.K."/>
            <person name="Cheuk R.F."/>
            <person name="Karlin-Newmann G."/>
            <person name="Liu S.X."/>
            <person name="Lam B."/>
            <person name="Sakano H."/>
            <person name="Wu T."/>
            <person name="Yu G."/>
            <person name="Miranda M."/>
            <person name="Quach H.L."/>
            <person name="Tripp M."/>
            <person name="Chang C.H."/>
            <person name="Lee J.M."/>
            <person name="Toriumi M.J."/>
            <person name="Chan M.M."/>
            <person name="Tang C.C."/>
            <person name="Onodera C.S."/>
            <person name="Deng J.M."/>
            <person name="Akiyama K."/>
            <person name="Ansari Y."/>
            <person name="Arakawa T."/>
            <person name="Banh J."/>
            <person name="Banno F."/>
            <person name="Bowser L."/>
            <person name="Brooks S.Y."/>
            <person name="Carninci P."/>
            <person name="Chao Q."/>
            <person name="Choy N."/>
            <person name="Enju A."/>
            <person name="Goldsmith A.D."/>
            <person name="Gurjal M."/>
            <person name="Hansen N.F."/>
            <person name="Hayashizaki Y."/>
            <person name="Johnson-Hopson C."/>
            <person name="Hsuan V.W."/>
            <person name="Iida K."/>
            <person name="Karnes M."/>
            <person name="Khan S."/>
            <person name="Koesema E."/>
            <person name="Ishida J."/>
            <person name="Jiang P.X."/>
            <person name="Jones T."/>
            <person name="Kawai J."/>
            <person name="Kamiya A."/>
            <person name="Meyers C."/>
            <person name="Nakajima M."/>
            <person name="Narusaka M."/>
            <person name="Seki M."/>
            <person name="Sakurai T."/>
            <person name="Satou M."/>
            <person name="Tamse R."/>
            <person name="Vaysberg M."/>
            <person name="Wallender E.K."/>
            <person name="Wong C."/>
            <person name="Yamamura Y."/>
            <person name="Yuan S."/>
            <person name="Shinozaki K."/>
            <person name="Davis R.W."/>
            <person name="Theologis A."/>
            <person name="Ecker J.R."/>
        </authorList>
    </citation>
    <scope>NUCLEOTIDE SEQUENCE [LARGE SCALE MRNA]</scope>
    <source>
        <strain>cv. Columbia</strain>
    </source>
</reference>
<reference key="4">
    <citation type="journal article" date="2004" name="J. Biomol. NMR">
        <title>Solution structure of a homodimeric hypothetical protein, At5g22580, a structural genomics target from Arabidopsis thaliana.</title>
        <authorList>
            <person name="Cornilescu G."/>
            <person name="Cornilescu C.C."/>
            <person name="Zhao Q."/>
            <person name="Frederick R.O."/>
            <person name="Peterson F.C."/>
            <person name="Thao S."/>
            <person name="Markley J.L."/>
        </authorList>
    </citation>
    <scope>STRUCTURE BY NMR</scope>
    <scope>SUBUNIT</scope>
</reference>
<organism>
    <name type="scientific">Arabidopsis thaliana</name>
    <name type="common">Mouse-ear cress</name>
    <dbReference type="NCBI Taxonomy" id="3702"/>
    <lineage>
        <taxon>Eukaryota</taxon>
        <taxon>Viridiplantae</taxon>
        <taxon>Streptophyta</taxon>
        <taxon>Embryophyta</taxon>
        <taxon>Tracheophyta</taxon>
        <taxon>Spermatophyta</taxon>
        <taxon>Magnoliopsida</taxon>
        <taxon>eudicotyledons</taxon>
        <taxon>Gunneridae</taxon>
        <taxon>Pentapetalae</taxon>
        <taxon>rosids</taxon>
        <taxon>malvids</taxon>
        <taxon>Brassicales</taxon>
        <taxon>Brassicaceae</taxon>
        <taxon>Camelineae</taxon>
        <taxon>Arabidopsis</taxon>
    </lineage>
</organism>
<keyword id="KW-0002">3D-structure</keyword>
<keyword id="KW-0460">Magnesium</keyword>
<keyword id="KW-0479">Metal-binding</keyword>
<keyword id="KW-1185">Reference proteome</keyword>
<keyword id="KW-0346">Stress response</keyword>
<sequence>MATSGFKHLVVVKFKEDTKVDEILKGLENLVSQIDTVKSFEWGEDKESHDMLRQGFTHAFSMTFENKDGYVAFTSHPLHVEFSAAFTAVIDKIVLLDFPVAAVKSSVVATP</sequence>
<accession>Q9FK81</accession>
<feature type="chain" id="PRO_0000220616" description="Stress-response A/B barrel domain-containing protein At5g22580">
    <location>
        <begin position="1"/>
        <end position="111"/>
    </location>
</feature>
<feature type="domain" description="Stress-response A/B barrel" evidence="2">
    <location>
        <begin position="6"/>
        <end position="98"/>
    </location>
</feature>
<feature type="binding site" evidence="1">
    <location>
        <position position="31"/>
    </location>
    <ligand>
        <name>Mg(2+)</name>
        <dbReference type="ChEBI" id="CHEBI:18420"/>
    </ligand>
</feature>
<feature type="binding site" evidence="1">
    <location>
        <position position="34"/>
    </location>
    <ligand>
        <name>Mg(2+)</name>
        <dbReference type="ChEBI" id="CHEBI:18420"/>
    </ligand>
</feature>
<feature type="binding site" evidence="1">
    <location>
        <position position="35"/>
    </location>
    <ligand>
        <name>Mg(2+)</name>
        <dbReference type="ChEBI" id="CHEBI:18420"/>
    </ligand>
</feature>
<feature type="binding site" evidence="1">
    <location>
        <position position="37"/>
    </location>
    <ligand>
        <name>Mg(2+)</name>
        <dbReference type="ChEBI" id="CHEBI:18420"/>
    </ligand>
</feature>
<feature type="strand" evidence="5">
    <location>
        <begin position="3"/>
        <end position="13"/>
    </location>
</feature>
<feature type="helix" evidence="5">
    <location>
        <begin position="20"/>
        <end position="31"/>
    </location>
</feature>
<feature type="helix" evidence="5">
    <location>
        <begin position="32"/>
        <end position="36"/>
    </location>
</feature>
<feature type="strand" evidence="5">
    <location>
        <begin position="39"/>
        <end position="45"/>
    </location>
</feature>
<feature type="turn" evidence="5">
    <location>
        <begin position="50"/>
        <end position="52"/>
    </location>
</feature>
<feature type="strand" evidence="5">
    <location>
        <begin position="58"/>
        <end position="66"/>
    </location>
</feature>
<feature type="helix" evidence="5">
    <location>
        <begin position="67"/>
        <end position="74"/>
    </location>
</feature>
<feature type="helix" evidence="5">
    <location>
        <begin position="77"/>
        <end position="88"/>
    </location>
</feature>
<feature type="strand" evidence="5">
    <location>
        <begin position="91"/>
        <end position="100"/>
    </location>
</feature>
<proteinExistence type="evidence at protein level"/>
<comment type="function">
    <text evidence="4">Involved in stress response.</text>
</comment>
<comment type="cofactor">
    <cofactor evidence="1">
        <name>Mg(2+)</name>
        <dbReference type="ChEBI" id="CHEBI:18420"/>
    </cofactor>
</comment>
<comment type="subunit">
    <text evidence="3">Homodimer.</text>
</comment>
<protein>
    <recommendedName>
        <fullName evidence="4">Stress-response A/B barrel domain-containing protein At5g22580</fullName>
    </recommendedName>
    <alternativeName>
        <fullName>Uncharacterized protein At5g22580</fullName>
    </alternativeName>
</protein>
<gene>
    <name type="ordered locus">At5g22580</name>
    <name type="ORF">MQJ16.12</name>
</gene>